<dbReference type="EMBL" id="CP000927">
    <property type="protein sequence ID" value="ABZ72816.1"/>
    <property type="molecule type" value="Genomic_DNA"/>
</dbReference>
<dbReference type="SMR" id="B0T853"/>
<dbReference type="STRING" id="366602.Caul_3689"/>
<dbReference type="KEGG" id="cak:Caul_3689"/>
<dbReference type="eggNOG" id="COG1706">
    <property type="taxonomic scope" value="Bacteria"/>
</dbReference>
<dbReference type="HOGENOM" id="CLU_045235_1_0_5"/>
<dbReference type="OrthoDB" id="9786431at2"/>
<dbReference type="GO" id="GO:0009428">
    <property type="term" value="C:bacterial-type flagellum basal body, distal rod, P ring"/>
    <property type="evidence" value="ECO:0007669"/>
    <property type="project" value="InterPro"/>
</dbReference>
<dbReference type="GO" id="GO:0030288">
    <property type="term" value="C:outer membrane-bounded periplasmic space"/>
    <property type="evidence" value="ECO:0007669"/>
    <property type="project" value="InterPro"/>
</dbReference>
<dbReference type="GO" id="GO:0005198">
    <property type="term" value="F:structural molecule activity"/>
    <property type="evidence" value="ECO:0007669"/>
    <property type="project" value="InterPro"/>
</dbReference>
<dbReference type="GO" id="GO:0071973">
    <property type="term" value="P:bacterial-type flagellum-dependent cell motility"/>
    <property type="evidence" value="ECO:0007669"/>
    <property type="project" value="InterPro"/>
</dbReference>
<dbReference type="HAMAP" id="MF_00416">
    <property type="entry name" value="FlgI"/>
    <property type="match status" value="1"/>
</dbReference>
<dbReference type="InterPro" id="IPR001782">
    <property type="entry name" value="Flag_FlgI"/>
</dbReference>
<dbReference type="NCBIfam" id="NF003676">
    <property type="entry name" value="PRK05303.1"/>
    <property type="match status" value="1"/>
</dbReference>
<dbReference type="PANTHER" id="PTHR30381">
    <property type="entry name" value="FLAGELLAR P-RING PERIPLASMIC PROTEIN FLGI"/>
    <property type="match status" value="1"/>
</dbReference>
<dbReference type="PANTHER" id="PTHR30381:SF0">
    <property type="entry name" value="FLAGELLAR P-RING PROTEIN"/>
    <property type="match status" value="1"/>
</dbReference>
<dbReference type="Pfam" id="PF02119">
    <property type="entry name" value="FlgI"/>
    <property type="match status" value="1"/>
</dbReference>
<dbReference type="PRINTS" id="PR01010">
    <property type="entry name" value="FLGPRINGFLGI"/>
</dbReference>
<sequence length="371" mass="38062">MSRSFFATVLGLALAAMTVMAAPADAKSRIKDIVAFEGVRDNQLIGYGIVVGLNGSGDSLRNAPMTKQSLEAMLERQGVNVRDGNLNTKNTAAVMVTANLPPFSAAGARMDVTVSTLGDAKSLLGGTLLVTALQGADGQTYAVAQGSVQTGSVSAGGASGSSVTKGVPTAGRIAAGGIIEKETGFQMVSMDVLRMTLRNPDFTTSRRIADVINGRFPGCAQAQNPTIVAVRPPAGMDMISFVTAIENLEVEPDAPAKVIIDEVAGVIVMGDDVRISQVAIAQGNLTISVQENPAVSQPTPFSRGGQTVVVPQSAVSIEEEKGKKLLTLGGGASLKSLIGGLNALGVTPRDMISILQAIKASGALQAEIEVM</sequence>
<keyword id="KW-0975">Bacterial flagellum</keyword>
<keyword id="KW-0574">Periplasm</keyword>
<keyword id="KW-0732">Signal</keyword>
<proteinExistence type="inferred from homology"/>
<feature type="signal peptide" evidence="1">
    <location>
        <begin position="1"/>
        <end position="21"/>
    </location>
</feature>
<feature type="chain" id="PRO_5000308804" description="Flagellar P-ring protein">
    <location>
        <begin position="22"/>
        <end position="371"/>
    </location>
</feature>
<organism>
    <name type="scientific">Caulobacter sp. (strain K31)</name>
    <dbReference type="NCBI Taxonomy" id="366602"/>
    <lineage>
        <taxon>Bacteria</taxon>
        <taxon>Pseudomonadati</taxon>
        <taxon>Pseudomonadota</taxon>
        <taxon>Alphaproteobacteria</taxon>
        <taxon>Caulobacterales</taxon>
        <taxon>Caulobacteraceae</taxon>
        <taxon>Caulobacter</taxon>
    </lineage>
</organism>
<protein>
    <recommendedName>
        <fullName evidence="1">Flagellar P-ring protein</fullName>
    </recommendedName>
    <alternativeName>
        <fullName evidence="1">Basal body P-ring protein</fullName>
    </alternativeName>
</protein>
<gene>
    <name evidence="1" type="primary">flgI</name>
    <name type="ordered locus">Caul_3689</name>
</gene>
<comment type="function">
    <text evidence="1">Assembles around the rod to form the L-ring and probably protects the motor/basal body from shearing forces during rotation.</text>
</comment>
<comment type="subunit">
    <text evidence="1">The basal body constitutes a major portion of the flagellar organelle and consists of four rings (L,P,S, and M) mounted on a central rod.</text>
</comment>
<comment type="subcellular location">
    <subcellularLocation>
        <location evidence="1">Periplasm</location>
    </subcellularLocation>
    <subcellularLocation>
        <location evidence="1">Bacterial flagellum basal body</location>
    </subcellularLocation>
</comment>
<comment type="similarity">
    <text evidence="1">Belongs to the FlgI family.</text>
</comment>
<reference key="1">
    <citation type="submission" date="2008-01" db="EMBL/GenBank/DDBJ databases">
        <title>Complete sequence of chromosome of Caulobacter sp. K31.</title>
        <authorList>
            <consortium name="US DOE Joint Genome Institute"/>
            <person name="Copeland A."/>
            <person name="Lucas S."/>
            <person name="Lapidus A."/>
            <person name="Barry K."/>
            <person name="Glavina del Rio T."/>
            <person name="Dalin E."/>
            <person name="Tice H."/>
            <person name="Pitluck S."/>
            <person name="Bruce D."/>
            <person name="Goodwin L."/>
            <person name="Thompson L.S."/>
            <person name="Brettin T."/>
            <person name="Detter J.C."/>
            <person name="Han C."/>
            <person name="Schmutz J."/>
            <person name="Larimer F."/>
            <person name="Land M."/>
            <person name="Hauser L."/>
            <person name="Kyrpides N."/>
            <person name="Kim E."/>
            <person name="Stephens C."/>
            <person name="Richardson P."/>
        </authorList>
    </citation>
    <scope>NUCLEOTIDE SEQUENCE [LARGE SCALE GENOMIC DNA]</scope>
    <source>
        <strain>K31</strain>
    </source>
</reference>
<name>FLGI_CAUSK</name>
<accession>B0T853</accession>
<evidence type="ECO:0000255" key="1">
    <source>
        <dbReference type="HAMAP-Rule" id="MF_00416"/>
    </source>
</evidence>